<keyword id="KW-0687">Ribonucleoprotein</keyword>
<keyword id="KW-0689">Ribosomal protein</keyword>
<protein>
    <recommendedName>
        <fullName evidence="1">Small ribosomal subunit protein uS9</fullName>
    </recommendedName>
    <alternativeName>
        <fullName evidence="3">30S ribosomal protein S9</fullName>
    </alternativeName>
</protein>
<evidence type="ECO:0000255" key="1">
    <source>
        <dbReference type="HAMAP-Rule" id="MF_00532"/>
    </source>
</evidence>
<evidence type="ECO:0000256" key="2">
    <source>
        <dbReference type="SAM" id="MobiDB-lite"/>
    </source>
</evidence>
<evidence type="ECO:0000305" key="3"/>
<dbReference type="EMBL" id="AP009324">
    <property type="protein sequence ID" value="BAF79084.1"/>
    <property type="molecule type" value="Genomic_DNA"/>
</dbReference>
<dbReference type="RefSeq" id="WP_001790547.1">
    <property type="nucleotide sequence ID" value="NZ_CTYB01000025.1"/>
</dbReference>
<dbReference type="SMR" id="A7X5B3"/>
<dbReference type="GeneID" id="98346529"/>
<dbReference type="KEGG" id="saw:SAHV_2201"/>
<dbReference type="HOGENOM" id="CLU_046483_2_1_9"/>
<dbReference type="GO" id="GO:0022627">
    <property type="term" value="C:cytosolic small ribosomal subunit"/>
    <property type="evidence" value="ECO:0007669"/>
    <property type="project" value="TreeGrafter"/>
</dbReference>
<dbReference type="GO" id="GO:0003723">
    <property type="term" value="F:RNA binding"/>
    <property type="evidence" value="ECO:0007669"/>
    <property type="project" value="TreeGrafter"/>
</dbReference>
<dbReference type="GO" id="GO:0003735">
    <property type="term" value="F:structural constituent of ribosome"/>
    <property type="evidence" value="ECO:0007669"/>
    <property type="project" value="InterPro"/>
</dbReference>
<dbReference type="GO" id="GO:0006412">
    <property type="term" value="P:translation"/>
    <property type="evidence" value="ECO:0007669"/>
    <property type="project" value="UniProtKB-UniRule"/>
</dbReference>
<dbReference type="FunFam" id="3.30.230.10:FF:000001">
    <property type="entry name" value="30S ribosomal protein S9"/>
    <property type="match status" value="1"/>
</dbReference>
<dbReference type="Gene3D" id="3.30.230.10">
    <property type="match status" value="1"/>
</dbReference>
<dbReference type="HAMAP" id="MF_00532_B">
    <property type="entry name" value="Ribosomal_uS9_B"/>
    <property type="match status" value="1"/>
</dbReference>
<dbReference type="InterPro" id="IPR020568">
    <property type="entry name" value="Ribosomal_Su5_D2-typ_SF"/>
</dbReference>
<dbReference type="InterPro" id="IPR000754">
    <property type="entry name" value="Ribosomal_uS9"/>
</dbReference>
<dbReference type="InterPro" id="IPR023035">
    <property type="entry name" value="Ribosomal_uS9_bac/plastid"/>
</dbReference>
<dbReference type="InterPro" id="IPR020574">
    <property type="entry name" value="Ribosomal_uS9_CS"/>
</dbReference>
<dbReference type="InterPro" id="IPR014721">
    <property type="entry name" value="Ribsml_uS5_D2-typ_fold_subgr"/>
</dbReference>
<dbReference type="NCBIfam" id="NF001099">
    <property type="entry name" value="PRK00132.1"/>
    <property type="match status" value="1"/>
</dbReference>
<dbReference type="PANTHER" id="PTHR21569">
    <property type="entry name" value="RIBOSOMAL PROTEIN S9"/>
    <property type="match status" value="1"/>
</dbReference>
<dbReference type="PANTHER" id="PTHR21569:SF1">
    <property type="entry name" value="SMALL RIBOSOMAL SUBUNIT PROTEIN US9M"/>
    <property type="match status" value="1"/>
</dbReference>
<dbReference type="Pfam" id="PF00380">
    <property type="entry name" value="Ribosomal_S9"/>
    <property type="match status" value="1"/>
</dbReference>
<dbReference type="SUPFAM" id="SSF54211">
    <property type="entry name" value="Ribosomal protein S5 domain 2-like"/>
    <property type="match status" value="1"/>
</dbReference>
<dbReference type="PROSITE" id="PS00360">
    <property type="entry name" value="RIBOSOMAL_S9"/>
    <property type="match status" value="1"/>
</dbReference>
<comment type="similarity">
    <text evidence="1">Belongs to the universal ribosomal protein uS9 family.</text>
</comment>
<organism>
    <name type="scientific">Staphylococcus aureus (strain Mu3 / ATCC 700698)</name>
    <dbReference type="NCBI Taxonomy" id="418127"/>
    <lineage>
        <taxon>Bacteria</taxon>
        <taxon>Bacillati</taxon>
        <taxon>Bacillota</taxon>
        <taxon>Bacilli</taxon>
        <taxon>Bacillales</taxon>
        <taxon>Staphylococcaceae</taxon>
        <taxon>Staphylococcus</taxon>
    </lineage>
</organism>
<reference key="1">
    <citation type="journal article" date="2008" name="Antimicrob. Agents Chemother.">
        <title>Mutated response regulator graR is responsible for phenotypic conversion of Staphylococcus aureus from heterogeneous vancomycin-intermediate resistance to vancomycin-intermediate resistance.</title>
        <authorList>
            <person name="Neoh H.-M."/>
            <person name="Cui L."/>
            <person name="Yuzawa H."/>
            <person name="Takeuchi F."/>
            <person name="Matsuo M."/>
            <person name="Hiramatsu K."/>
        </authorList>
    </citation>
    <scope>NUCLEOTIDE SEQUENCE [LARGE SCALE GENOMIC DNA]</scope>
    <source>
        <strain>Mu3 / ATCC 700698</strain>
    </source>
</reference>
<name>RS9_STAA1</name>
<feature type="chain" id="PRO_1000051334" description="Small ribosomal subunit protein uS9">
    <location>
        <begin position="1"/>
        <end position="130"/>
    </location>
</feature>
<feature type="region of interest" description="Disordered" evidence="2">
    <location>
        <begin position="99"/>
        <end position="130"/>
    </location>
</feature>
<feature type="compositionally biased region" description="Basic residues" evidence="2">
    <location>
        <begin position="111"/>
        <end position="130"/>
    </location>
</feature>
<accession>A7X5B3</accession>
<proteinExistence type="inferred from homology"/>
<gene>
    <name evidence="1" type="primary">rpsI</name>
    <name type="ordered locus">SAHV_2201</name>
</gene>
<sequence>MAQVEYRGTGRRKNSVARVRLVPGEGNITVNNRDVREYLPFESLILDLNQPFDVTETKGNYDVLVNVHGGGFTGQAQAIRHGIARALLEADPEYRGSLKRAGLLTRDPRMKERKKPGLKAARRSPQFSKR</sequence>